<gene>
    <name type="primary">ARPIN</name>
    <name type="synonym">C15orf38</name>
</gene>
<organism>
    <name type="scientific">Homo sapiens</name>
    <name type="common">Human</name>
    <dbReference type="NCBI Taxonomy" id="9606"/>
    <lineage>
        <taxon>Eukaryota</taxon>
        <taxon>Metazoa</taxon>
        <taxon>Chordata</taxon>
        <taxon>Craniata</taxon>
        <taxon>Vertebrata</taxon>
        <taxon>Euteleostomi</taxon>
        <taxon>Mammalia</taxon>
        <taxon>Eutheria</taxon>
        <taxon>Euarchontoglires</taxon>
        <taxon>Primates</taxon>
        <taxon>Haplorrhini</taxon>
        <taxon>Catarrhini</taxon>
        <taxon>Hominidae</taxon>
        <taxon>Homo</taxon>
    </lineage>
</organism>
<reference key="1">
    <citation type="journal article" date="2004" name="Nat. Genet.">
        <title>Complete sequencing and characterization of 21,243 full-length human cDNAs.</title>
        <authorList>
            <person name="Ota T."/>
            <person name="Suzuki Y."/>
            <person name="Nishikawa T."/>
            <person name="Otsuki T."/>
            <person name="Sugiyama T."/>
            <person name="Irie R."/>
            <person name="Wakamatsu A."/>
            <person name="Hayashi K."/>
            <person name="Sato H."/>
            <person name="Nagai K."/>
            <person name="Kimura K."/>
            <person name="Makita H."/>
            <person name="Sekine M."/>
            <person name="Obayashi M."/>
            <person name="Nishi T."/>
            <person name="Shibahara T."/>
            <person name="Tanaka T."/>
            <person name="Ishii S."/>
            <person name="Yamamoto J."/>
            <person name="Saito K."/>
            <person name="Kawai Y."/>
            <person name="Isono Y."/>
            <person name="Nakamura Y."/>
            <person name="Nagahari K."/>
            <person name="Murakami K."/>
            <person name="Yasuda T."/>
            <person name="Iwayanagi T."/>
            <person name="Wagatsuma M."/>
            <person name="Shiratori A."/>
            <person name="Sudo H."/>
            <person name="Hosoiri T."/>
            <person name="Kaku Y."/>
            <person name="Kodaira H."/>
            <person name="Kondo H."/>
            <person name="Sugawara M."/>
            <person name="Takahashi M."/>
            <person name="Kanda K."/>
            <person name="Yokoi T."/>
            <person name="Furuya T."/>
            <person name="Kikkawa E."/>
            <person name="Omura Y."/>
            <person name="Abe K."/>
            <person name="Kamihara K."/>
            <person name="Katsuta N."/>
            <person name="Sato K."/>
            <person name="Tanikawa M."/>
            <person name="Yamazaki M."/>
            <person name="Ninomiya K."/>
            <person name="Ishibashi T."/>
            <person name="Yamashita H."/>
            <person name="Murakawa K."/>
            <person name="Fujimori K."/>
            <person name="Tanai H."/>
            <person name="Kimata M."/>
            <person name="Watanabe M."/>
            <person name="Hiraoka S."/>
            <person name="Chiba Y."/>
            <person name="Ishida S."/>
            <person name="Ono Y."/>
            <person name="Takiguchi S."/>
            <person name="Watanabe S."/>
            <person name="Yosida M."/>
            <person name="Hotuta T."/>
            <person name="Kusano J."/>
            <person name="Kanehori K."/>
            <person name="Takahashi-Fujii A."/>
            <person name="Hara H."/>
            <person name="Tanase T.-O."/>
            <person name="Nomura Y."/>
            <person name="Togiya S."/>
            <person name="Komai F."/>
            <person name="Hara R."/>
            <person name="Takeuchi K."/>
            <person name="Arita M."/>
            <person name="Imose N."/>
            <person name="Musashino K."/>
            <person name="Yuuki H."/>
            <person name="Oshima A."/>
            <person name="Sasaki N."/>
            <person name="Aotsuka S."/>
            <person name="Yoshikawa Y."/>
            <person name="Matsunawa H."/>
            <person name="Ichihara T."/>
            <person name="Shiohata N."/>
            <person name="Sano S."/>
            <person name="Moriya S."/>
            <person name="Momiyama H."/>
            <person name="Satoh N."/>
            <person name="Takami S."/>
            <person name="Terashima Y."/>
            <person name="Suzuki O."/>
            <person name="Nakagawa S."/>
            <person name="Senoh A."/>
            <person name="Mizoguchi H."/>
            <person name="Goto Y."/>
            <person name="Shimizu F."/>
            <person name="Wakebe H."/>
            <person name="Hishigaki H."/>
            <person name="Watanabe T."/>
            <person name="Sugiyama A."/>
            <person name="Takemoto M."/>
            <person name="Kawakami B."/>
            <person name="Yamazaki M."/>
            <person name="Watanabe K."/>
            <person name="Kumagai A."/>
            <person name="Itakura S."/>
            <person name="Fukuzumi Y."/>
            <person name="Fujimori Y."/>
            <person name="Komiyama M."/>
            <person name="Tashiro H."/>
            <person name="Tanigami A."/>
            <person name="Fujiwara T."/>
            <person name="Ono T."/>
            <person name="Yamada K."/>
            <person name="Fujii Y."/>
            <person name="Ozaki K."/>
            <person name="Hirao M."/>
            <person name="Ohmori Y."/>
            <person name="Kawabata A."/>
            <person name="Hikiji T."/>
            <person name="Kobatake N."/>
            <person name="Inagaki H."/>
            <person name="Ikema Y."/>
            <person name="Okamoto S."/>
            <person name="Okitani R."/>
            <person name="Kawakami T."/>
            <person name="Noguchi S."/>
            <person name="Itoh T."/>
            <person name="Shigeta K."/>
            <person name="Senba T."/>
            <person name="Matsumura K."/>
            <person name="Nakajima Y."/>
            <person name="Mizuno T."/>
            <person name="Morinaga M."/>
            <person name="Sasaki M."/>
            <person name="Togashi T."/>
            <person name="Oyama M."/>
            <person name="Hata H."/>
            <person name="Watanabe M."/>
            <person name="Komatsu T."/>
            <person name="Mizushima-Sugano J."/>
            <person name="Satoh T."/>
            <person name="Shirai Y."/>
            <person name="Takahashi Y."/>
            <person name="Nakagawa K."/>
            <person name="Okumura K."/>
            <person name="Nagase T."/>
            <person name="Nomura N."/>
            <person name="Kikuchi H."/>
            <person name="Masuho Y."/>
            <person name="Yamashita R."/>
            <person name="Nakai K."/>
            <person name="Yada T."/>
            <person name="Nakamura Y."/>
            <person name="Ohara O."/>
            <person name="Isogai T."/>
            <person name="Sugano S."/>
        </authorList>
    </citation>
    <scope>NUCLEOTIDE SEQUENCE [LARGE SCALE MRNA] (ISOFORM C15ORF38-AP3S2)</scope>
    <source>
        <tissue>Signet-ring cell carcinoma</tissue>
    </source>
</reference>
<reference key="2">
    <citation type="journal article" date="2006" name="Nature">
        <title>Analysis of the DNA sequence and duplication history of human chromosome 15.</title>
        <authorList>
            <person name="Zody M.C."/>
            <person name="Garber M."/>
            <person name="Sharpe T."/>
            <person name="Young S.K."/>
            <person name="Rowen L."/>
            <person name="O'Neill K."/>
            <person name="Whittaker C.A."/>
            <person name="Kamal M."/>
            <person name="Chang J.L."/>
            <person name="Cuomo C.A."/>
            <person name="Dewar K."/>
            <person name="FitzGerald M.G."/>
            <person name="Kodira C.D."/>
            <person name="Madan A."/>
            <person name="Qin S."/>
            <person name="Yang X."/>
            <person name="Abbasi N."/>
            <person name="Abouelleil A."/>
            <person name="Arachchi H.M."/>
            <person name="Baradarani L."/>
            <person name="Birditt B."/>
            <person name="Bloom S."/>
            <person name="Bloom T."/>
            <person name="Borowsky M.L."/>
            <person name="Burke J."/>
            <person name="Butler J."/>
            <person name="Cook A."/>
            <person name="DeArellano K."/>
            <person name="DeCaprio D."/>
            <person name="Dorris L. III"/>
            <person name="Dors M."/>
            <person name="Eichler E.E."/>
            <person name="Engels R."/>
            <person name="Fahey J."/>
            <person name="Fleetwood P."/>
            <person name="Friedman C."/>
            <person name="Gearin G."/>
            <person name="Hall J.L."/>
            <person name="Hensley G."/>
            <person name="Johnson E."/>
            <person name="Jones C."/>
            <person name="Kamat A."/>
            <person name="Kaur A."/>
            <person name="Locke D.P."/>
            <person name="Madan A."/>
            <person name="Munson G."/>
            <person name="Jaffe D.B."/>
            <person name="Lui A."/>
            <person name="Macdonald P."/>
            <person name="Mauceli E."/>
            <person name="Naylor J.W."/>
            <person name="Nesbitt R."/>
            <person name="Nicol R."/>
            <person name="O'Leary S.B."/>
            <person name="Ratcliffe A."/>
            <person name="Rounsley S."/>
            <person name="She X."/>
            <person name="Sneddon K.M.B."/>
            <person name="Stewart S."/>
            <person name="Sougnez C."/>
            <person name="Stone S.M."/>
            <person name="Topham K."/>
            <person name="Vincent D."/>
            <person name="Wang S."/>
            <person name="Zimmer A.R."/>
            <person name="Birren B.W."/>
            <person name="Hood L."/>
            <person name="Lander E.S."/>
            <person name="Nusbaum C."/>
        </authorList>
    </citation>
    <scope>NUCLEOTIDE SEQUENCE [LARGE SCALE GENOMIC DNA]</scope>
</reference>
<reference key="3">
    <citation type="journal article" date="2004" name="Genome Res.">
        <title>The status, quality, and expansion of the NIH full-length cDNA project: the Mammalian Gene Collection (MGC).</title>
        <authorList>
            <consortium name="The MGC Project Team"/>
        </authorList>
    </citation>
    <scope>NUCLEOTIDE SEQUENCE [LARGE SCALE MRNA] (ISOFORM 1)</scope>
    <source>
        <tissue>Fetal brain</tissue>
    </source>
</reference>
<reference key="4">
    <citation type="journal article" date="2013" name="Nature">
        <title>Inhibitory signalling to the Arp2/3 complex steers cell migration.</title>
        <authorList>
            <person name="Dang I."/>
            <person name="Gorelik R."/>
            <person name="Sousa-Blin C."/>
            <person name="Derivery E."/>
            <person name="Guerin C."/>
            <person name="Linkner J."/>
            <person name="Nemethova M."/>
            <person name="Dumortier J.G."/>
            <person name="Giger F.A."/>
            <person name="Chipysheva T.A."/>
            <person name="Ermilova V.D."/>
            <person name="Vacher S."/>
            <person name="Campanacci V."/>
            <person name="Herrada I."/>
            <person name="Planson A.G."/>
            <person name="Fetics S."/>
            <person name="Henriot V."/>
            <person name="David V."/>
            <person name="Oguievetskaia K."/>
            <person name="Lakisic G."/>
            <person name="Pierre F."/>
            <person name="Steffen A."/>
            <person name="Boyreau A."/>
            <person name="Peyrieras N."/>
            <person name="Rottner K."/>
            <person name="Zinn-Justin S."/>
            <person name="Cherfils J."/>
            <person name="Bieche I."/>
            <person name="Alexandrova A.Y."/>
            <person name="David N.B."/>
            <person name="Small J.V."/>
            <person name="Faix J."/>
            <person name="Blanchoin L."/>
            <person name="Gautreau A."/>
        </authorList>
    </citation>
    <scope>FUNCTION</scope>
    <scope>DOMAIN</scope>
    <scope>INTERACTION WITH ARPC2</scope>
    <scope>ASSOCIATION WITH THE ARP2/3 COMPLEX</scope>
</reference>
<sequence length="226" mass="24943">MSRIYHDGALRNKAVQSVRLPGAWDPAAHQGGNGVLLEGELIDVSRHSILDTHGRKERYYVLYIRPSHIHRRKFDAKGNEIEPNFSATRKVNTGFLMSSYKVEAKGDTDRLTPEALKGLVNKPELLALTESLTPDHTVAFWMPESEMEVMELELGAGVRLKTRGDGPFLDSLAKLEAGTVTKCNFTGDGKTGASWTDNIMAQKCSKGAAAEIREQGDGAEDEEWDD</sequence>
<protein>
    <recommendedName>
        <fullName>Arpin</fullName>
    </recommendedName>
    <alternativeName>
        <fullName>Arp2/3 inhibition protein</fullName>
    </alternativeName>
</protein>
<name>ARPIN_HUMAN</name>
<feature type="chain" id="PRO_0000244265" description="Arpin">
    <location>
        <begin position="1"/>
        <end position="226"/>
    </location>
</feature>
<feature type="region of interest" description="Necessary and sufficient for interaction with ARPC2" evidence="2">
    <location>
        <begin position="211"/>
        <end position="226"/>
    </location>
</feature>
<feature type="splice variant" id="VSP_047416" description="In isoform C15orf38-AP3S2." evidence="3">
    <original>DD</original>
    <variation>PEEIQQQIVRETFHLVLKRDDNICNFLEGGSLIGGSDYKLIYRHYATLYFVFCVDSSESELGILDLIQVFVETLDKCFENVCELDLIFHMDKVHYILQEVVMGGMVLETNMNEIVAQIEAQNRLEKSEGGLSAAPARAVSAVKNINLPEIPRNINIGDLNIKVPNLSQFV</variation>
    <location>
        <begin position="225"/>
        <end position="226"/>
    </location>
</feature>
<feature type="helix" evidence="5">
    <location>
        <begin position="194"/>
        <end position="200"/>
    </location>
</feature>
<feature type="helix" evidence="5">
    <location>
        <begin position="203"/>
        <end position="206"/>
    </location>
</feature>
<feature type="strand" evidence="5">
    <location>
        <begin position="207"/>
        <end position="209"/>
    </location>
</feature>
<feature type="strand" evidence="5">
    <location>
        <begin position="211"/>
        <end position="214"/>
    </location>
</feature>
<comment type="function">
    <text evidence="2">Regulates actin polymerization by inhibiting the actin-nucleating activity of the Arp2/3 complex; the function is competitive with nucleation promoting factors. Participates in an incoherent feedforward loop at the lamellipodium tip where it inhibits the ARP2/2 complex in response to Rac signaling and where Rac also stimulates actin polymerization through the WAVE complex. Involved in steering cell migration by controlling its directional persistence.</text>
</comment>
<comment type="subunit">
    <text evidence="2">Associates with the Arp2/3 complex. Interacts with ARPC2; enhanced by activated RAC1. Interacts with ARPC5; the interaction is dependent on RAC1.</text>
</comment>
<comment type="interaction">
    <interactant intactId="EBI-10258086">
        <id>Q7Z6K5</id>
    </interactant>
    <interactant intactId="EBI-742054">
        <id>Q96D03</id>
        <label>DDIT4L</label>
    </interactant>
    <organismsDiffer>false</organismsDiffer>
    <experiments>3</experiments>
</comment>
<comment type="interaction">
    <interactant intactId="EBI-10258086">
        <id>Q7Z6K5</id>
    </interactant>
    <interactant intactId="EBI-740897">
        <id>Q9GZT8</id>
        <label>NIF3L1</label>
    </interactant>
    <organismsDiffer>false</organismsDiffer>
    <experiments>3</experiments>
</comment>
<comment type="interaction">
    <interactant intactId="EBI-10258086">
        <id>Q7Z6K5</id>
    </interactant>
    <interactant intactId="EBI-719493">
        <id>P14373</id>
        <label>TRIM27</label>
    </interactant>
    <organismsDiffer>false</organismsDiffer>
    <experiments>3</experiments>
</comment>
<comment type="interaction">
    <interactant intactId="EBI-16079078">
        <id>Q7Z6K5-1</id>
    </interactant>
    <interactant intactId="EBI-352356">
        <id>O15144</id>
        <label>ARPC2</label>
    </interactant>
    <organismsDiffer>false</organismsDiffer>
    <experiments>2</experiments>
</comment>
<comment type="interaction">
    <interactant intactId="EBI-16079078">
        <id>Q7Z6K5-1</id>
    </interactant>
    <interactant intactId="EBI-4398527">
        <id>Q9H2K2</id>
        <label>TNKS2</label>
    </interactant>
    <organismsDiffer>false</organismsDiffer>
    <experiments>5</experiments>
</comment>
<comment type="subcellular location">
    <subcellularLocation>
        <location evidence="1">Cell projection</location>
        <location evidence="1">Lamellipodium</location>
    </subcellularLocation>
    <text evidence="1">Colocalized with the WAVE complex at lamelliupodium tip.</text>
</comment>
<comment type="alternative products">
    <event type="alternative splicing"/>
    <isoform>
        <id>Q7Z6K5-1</id>
        <name>1</name>
        <sequence type="displayed"/>
    </isoform>
    <isoform>
        <id>Q7Z6K5-2</id>
        <name>C15orf38-AP3S2</name>
        <sequence type="described" ref="VSP_047416"/>
    </isoform>
</comment>
<comment type="domain">
    <text evidence="2">The acidic C-terminus is necessary and sufficient to inhibit ARP2/3 complex activity.</text>
</comment>
<comment type="miscellaneous">
    <molecule>Isoform C15orf38-AP3S2</molecule>
    <text evidence="4">Based on a naturally occurring readthrough transcript which produces a C15orf38-AP3S2 fusion protein.</text>
</comment>
<comment type="similarity">
    <text evidence="4">Belongs to the Arpin family.</text>
</comment>
<accession>Q7Z6K5</accession>
<accession>E2QRD5</accession>
<proteinExistence type="evidence at protein level"/>
<keyword id="KW-0002">3D-structure</keyword>
<keyword id="KW-0025">Alternative splicing</keyword>
<keyword id="KW-0966">Cell projection</keyword>
<keyword id="KW-1267">Proteomics identification</keyword>
<keyword id="KW-1185">Reference proteome</keyword>
<evidence type="ECO:0000250" key="1"/>
<evidence type="ECO:0000269" key="2">
    <source>
    </source>
</evidence>
<evidence type="ECO:0000303" key="3">
    <source>
    </source>
</evidence>
<evidence type="ECO:0000305" key="4"/>
<evidence type="ECO:0007829" key="5">
    <source>
        <dbReference type="PDB" id="7JPN"/>
    </source>
</evidence>
<dbReference type="EMBL" id="AK000495">
    <property type="status" value="NOT_ANNOTATED_CDS"/>
    <property type="molecule type" value="mRNA"/>
</dbReference>
<dbReference type="EMBL" id="AC018988">
    <property type="status" value="NOT_ANNOTATED_CDS"/>
    <property type="molecule type" value="Genomic_DNA"/>
</dbReference>
<dbReference type="EMBL" id="AC027176">
    <property type="status" value="NOT_ANNOTATED_CDS"/>
    <property type="molecule type" value="Genomic_DNA"/>
</dbReference>
<dbReference type="EMBL" id="BC053602">
    <property type="protein sequence ID" value="AAH53602.1"/>
    <property type="molecule type" value="mRNA"/>
</dbReference>
<dbReference type="CCDS" id="CCDS42080.1">
    <molecule id="Q7Z6K5-1"/>
</dbReference>
<dbReference type="RefSeq" id="NP_001269309.1">
    <property type="nucleotide sequence ID" value="NM_001282380.1"/>
</dbReference>
<dbReference type="RefSeq" id="NP_872422.1">
    <molecule id="Q7Z6K5-1"/>
    <property type="nucleotide sequence ID" value="NM_182616.4"/>
</dbReference>
<dbReference type="PDB" id="4Z68">
    <property type="method" value="X-ray"/>
    <property type="resolution" value="1.86 A"/>
    <property type="chains" value="E=211-222"/>
</dbReference>
<dbReference type="PDB" id="7JPN">
    <property type="method" value="EM"/>
    <property type="resolution" value="3.24 A"/>
    <property type="chains" value="H=193-226"/>
</dbReference>
<dbReference type="PDBsum" id="4Z68"/>
<dbReference type="PDBsum" id="7JPN"/>
<dbReference type="EMDB" id="EMD-22416"/>
<dbReference type="SASBDB" id="Q7Z6K5"/>
<dbReference type="SMR" id="Q7Z6K5"/>
<dbReference type="BioGRID" id="131507">
    <property type="interactions" value="28"/>
</dbReference>
<dbReference type="BioGRID" id="1529312">
    <property type="interactions" value="2"/>
</dbReference>
<dbReference type="DIP" id="DIP-60587N"/>
<dbReference type="FunCoup" id="Q7Z6K5">
    <property type="interactions" value="81"/>
</dbReference>
<dbReference type="IntAct" id="Q7Z6K5">
    <property type="interactions" value="11"/>
</dbReference>
<dbReference type="STRING" id="9606.ENSP00000350075"/>
<dbReference type="iPTMnet" id="Q7Z6K5"/>
<dbReference type="PhosphoSitePlus" id="Q7Z6K5"/>
<dbReference type="BioMuta" id="ARPIN"/>
<dbReference type="DMDM" id="74738824"/>
<dbReference type="jPOST" id="Q7Z6K5"/>
<dbReference type="MassIVE" id="Q7Z6K5"/>
<dbReference type="PaxDb" id="9606-ENSP00000350075"/>
<dbReference type="PeptideAtlas" id="Q7Z6K5"/>
<dbReference type="ProteomicsDB" id="15234"/>
<dbReference type="ProteomicsDB" id="69435">
    <molecule id="Q7Z6K5-1"/>
</dbReference>
<dbReference type="Pumba" id="Q7Z6K5"/>
<dbReference type="TopDownProteomics" id="Q7Z6K5-1">
    <molecule id="Q7Z6K5-1"/>
</dbReference>
<dbReference type="Antibodypedia" id="54707">
    <property type="antibodies" value="45 antibodies from 11 providers"/>
</dbReference>
<dbReference type="DNASU" id="348110"/>
<dbReference type="Ensembl" id="ENST00000357484.10">
    <molecule id="Q7Z6K5-1"/>
    <property type="protein sequence ID" value="ENSP00000350075.5"/>
    <property type="gene ID" value="ENSG00000242498.8"/>
</dbReference>
<dbReference type="GeneID" id="348110"/>
<dbReference type="KEGG" id="hsa:348110"/>
<dbReference type="MANE-Select" id="ENST00000357484.10">
    <property type="protein sequence ID" value="ENSP00000350075.5"/>
    <property type="RefSeq nucleotide sequence ID" value="NM_182616.4"/>
    <property type="RefSeq protein sequence ID" value="NP_872422.1"/>
</dbReference>
<dbReference type="UCSC" id="uc002bou.4">
    <molecule id="Q7Z6K5-1"/>
    <property type="organism name" value="human"/>
</dbReference>
<dbReference type="AGR" id="HGNC:28782"/>
<dbReference type="CTD" id="348110"/>
<dbReference type="DisGeNET" id="348110"/>
<dbReference type="GeneCards" id="ARPIN"/>
<dbReference type="HGNC" id="HGNC:28782">
    <property type="gene designation" value="ARPIN"/>
</dbReference>
<dbReference type="HPA" id="ENSG00000242498">
    <property type="expression patterns" value="Low tissue specificity"/>
</dbReference>
<dbReference type="MIM" id="615543">
    <property type="type" value="gene"/>
</dbReference>
<dbReference type="neXtProt" id="NX_Q7Z6K5"/>
<dbReference type="OpenTargets" id="ENSG00000242498"/>
<dbReference type="PharmGKB" id="PA142672274"/>
<dbReference type="VEuPathDB" id="HostDB:ENSG00000242498"/>
<dbReference type="eggNOG" id="ENOG502R4IG">
    <property type="taxonomic scope" value="Eukaryota"/>
</dbReference>
<dbReference type="GeneTree" id="ENSGT00530000064251"/>
<dbReference type="HOGENOM" id="CLU_106544_0_0_1"/>
<dbReference type="InParanoid" id="Q7Z6K5"/>
<dbReference type="OMA" id="VAFWISE"/>
<dbReference type="OrthoDB" id="5953051at2759"/>
<dbReference type="PAN-GO" id="Q7Z6K5">
    <property type="GO annotations" value="1 GO annotation based on evolutionary models"/>
</dbReference>
<dbReference type="PhylomeDB" id="Q7Z6K5"/>
<dbReference type="TreeFam" id="TF300189"/>
<dbReference type="PathwayCommons" id="Q7Z6K5"/>
<dbReference type="SignaLink" id="Q7Z6K5"/>
<dbReference type="BioGRID-ORCS" id="348110">
    <property type="hits" value="11 hits in 1091 CRISPR screens"/>
</dbReference>
<dbReference type="EvolutionaryTrace" id="Q7Z6K5"/>
<dbReference type="GenomeRNAi" id="348110"/>
<dbReference type="Pharos" id="Q7Z6K5">
    <property type="development level" value="Tbio"/>
</dbReference>
<dbReference type="PRO" id="PR:Q7Z6K5"/>
<dbReference type="Proteomes" id="UP000005640">
    <property type="component" value="Chromosome 15"/>
</dbReference>
<dbReference type="RNAct" id="Q7Z6K5">
    <property type="molecule type" value="protein"/>
</dbReference>
<dbReference type="Bgee" id="ENSG00000242498">
    <property type="expression patterns" value="Expressed in body of pancreas and 190 other cell types or tissues"/>
</dbReference>
<dbReference type="ExpressionAtlas" id="Q7Z6K5">
    <property type="expression patterns" value="baseline and differential"/>
</dbReference>
<dbReference type="GO" id="GO:0030027">
    <property type="term" value="C:lamellipodium"/>
    <property type="evidence" value="ECO:0000250"/>
    <property type="project" value="UniProtKB"/>
</dbReference>
<dbReference type="GO" id="GO:0033058">
    <property type="term" value="P:directional locomotion"/>
    <property type="evidence" value="ECO:0000315"/>
    <property type="project" value="UniProtKB"/>
</dbReference>
<dbReference type="GO" id="GO:0051126">
    <property type="term" value="P:negative regulation of actin nucleation"/>
    <property type="evidence" value="ECO:0000314"/>
    <property type="project" value="UniProtKB"/>
</dbReference>
<dbReference type="GO" id="GO:0030336">
    <property type="term" value="P:negative regulation of cell migration"/>
    <property type="evidence" value="ECO:0000315"/>
    <property type="project" value="UniProtKB"/>
</dbReference>
<dbReference type="GO" id="GO:2000393">
    <property type="term" value="P:negative regulation of lamellipodium morphogenesis"/>
    <property type="evidence" value="ECO:0000315"/>
    <property type="project" value="UniProtKB"/>
</dbReference>
<dbReference type="InterPro" id="IPR018889">
    <property type="entry name" value="Arpin"/>
</dbReference>
<dbReference type="PANTHER" id="PTHR31199">
    <property type="entry name" value="ARPIN"/>
    <property type="match status" value="1"/>
</dbReference>
<dbReference type="PANTHER" id="PTHR31199:SF1">
    <property type="entry name" value="ARPIN"/>
    <property type="match status" value="1"/>
</dbReference>
<dbReference type="Pfam" id="PF10574">
    <property type="entry name" value="UPF0552"/>
    <property type="match status" value="1"/>
</dbReference>